<accession>P28873</accession>
<dbReference type="EMBL" id="X53823">
    <property type="protein sequence ID" value="CAA37820.1"/>
    <property type="molecule type" value="Genomic_DNA"/>
</dbReference>
<dbReference type="PIR" id="S16304">
    <property type="entry name" value="S16304"/>
</dbReference>
<dbReference type="ChEMBL" id="CHEMBL2007621"/>
<dbReference type="TCDB" id="2.A.1.2.6">
    <property type="family name" value="the major facilitator superfamily (mfs)"/>
</dbReference>
<dbReference type="VEuPathDB" id="FungiDB:C6_03170C_A"/>
<dbReference type="VEuPathDB" id="FungiDB:CAWG_05053"/>
<dbReference type="PHI-base" id="PHI:26"/>
<dbReference type="GO" id="GO:0005886">
    <property type="term" value="C:plasma membrane"/>
    <property type="evidence" value="ECO:0007669"/>
    <property type="project" value="UniProtKB-ARBA"/>
</dbReference>
<dbReference type="GO" id="GO:0015244">
    <property type="term" value="F:fluconazole transmembrane transporter activity"/>
    <property type="evidence" value="ECO:0007669"/>
    <property type="project" value="TreeGrafter"/>
</dbReference>
<dbReference type="GO" id="GO:0042910">
    <property type="term" value="F:xenobiotic transmembrane transporter activity"/>
    <property type="evidence" value="ECO:0007669"/>
    <property type="project" value="InterPro"/>
</dbReference>
<dbReference type="GO" id="GO:0046677">
    <property type="term" value="P:response to antibiotic"/>
    <property type="evidence" value="ECO:0007669"/>
    <property type="project" value="UniProtKB-KW"/>
</dbReference>
<dbReference type="GO" id="GO:1990961">
    <property type="term" value="P:xenobiotic detoxification by transmembrane export across the plasma membrane"/>
    <property type="evidence" value="ECO:0007669"/>
    <property type="project" value="TreeGrafter"/>
</dbReference>
<dbReference type="CDD" id="cd17323">
    <property type="entry name" value="MFS_Tpo1_MDR_like"/>
    <property type="match status" value="1"/>
</dbReference>
<dbReference type="FunFam" id="1.20.1250.20:FF:000011">
    <property type="entry name" value="MFS multidrug transporter, putative"/>
    <property type="match status" value="1"/>
</dbReference>
<dbReference type="Gene3D" id="1.20.1250.20">
    <property type="entry name" value="MFS general substrate transporter like domains"/>
    <property type="match status" value="1"/>
</dbReference>
<dbReference type="InterPro" id="IPR011701">
    <property type="entry name" value="MFS"/>
</dbReference>
<dbReference type="InterPro" id="IPR020846">
    <property type="entry name" value="MFS_dom"/>
</dbReference>
<dbReference type="InterPro" id="IPR036259">
    <property type="entry name" value="MFS_trans_sf"/>
</dbReference>
<dbReference type="InterPro" id="IPR004734">
    <property type="entry name" value="Multidrug-R"/>
</dbReference>
<dbReference type="NCBIfam" id="TIGR00880">
    <property type="entry name" value="2_A_01_02"/>
    <property type="match status" value="1"/>
</dbReference>
<dbReference type="PANTHER" id="PTHR23502:SF23">
    <property type="entry name" value="FLUCONAZOLE RESISTANCE PROTEIN 1"/>
    <property type="match status" value="1"/>
</dbReference>
<dbReference type="PANTHER" id="PTHR23502">
    <property type="entry name" value="MAJOR FACILITATOR SUPERFAMILY"/>
    <property type="match status" value="1"/>
</dbReference>
<dbReference type="Pfam" id="PF07690">
    <property type="entry name" value="MFS_1"/>
    <property type="match status" value="1"/>
</dbReference>
<dbReference type="SUPFAM" id="SSF103473">
    <property type="entry name" value="MFS general substrate transporter"/>
    <property type="match status" value="1"/>
</dbReference>
<dbReference type="PROSITE" id="PS50850">
    <property type="entry name" value="MFS"/>
    <property type="match status" value="1"/>
</dbReference>
<sequence>MHYRFLRDSFVGRVTYHLSKHKYFAHPEEAKNYIIPEKYLADYKPTLADDTSINFEKEEIDNQGEPNSSQSSSSNNTIVDNNNNNNNDVDGDKIVVTWDGDDDPENPQNWPTLQKAFFIFQISFLTTSVYMGSAVYTPGIEELMHDFGIGRVVATLPLTLFVIGYGVGPLVFSPMSENAIFGRTSIYIITLFLFVILQIPTALVNNIAGLCILRFLGGFFASPCLATGGASVADVVKFWNLPVGLAAWSLGAVCGPSFGPFFGSILTVKASWRWTFWFMCIISGFSFVMLCFTLPETFGKTLLYRKAKRLRAITGNDRITSEGEIENSKMTSHELIIDTLWRPLEITVMEPVVLLINIYIAMVYSILYLFFEVFPIYFVGVKHFTLVELGTTYMSIVIGIVIAAFIYIPVIRQKFTKPILRQEQVFPEVFIPIAIVGGILLTSGLFIFGWSANRTTHWVGPLFGAATTASGAFLIFQTLFNFMGASFKPHYIASVFASNDLFRSVIASVFPLFGAPLFDNLATPEYPVAWGSSVLGFITLVMIAIPVLFYLNGPKLRARSKYAN</sequence>
<reference key="1">
    <citation type="journal article" date="1991" name="Mol. Gen. Genet.">
        <title>Analysis of a Candida albicans gene that encodes a novel mechanism for resistance to benomyl and methotrexate.</title>
        <authorList>
            <person name="Fling M.E."/>
            <person name="Kopf J."/>
            <person name="Tamarkin A."/>
            <person name="Gorman J.A."/>
            <person name="Smith H.A."/>
            <person name="Koltin Y."/>
        </authorList>
    </citation>
    <scope>NUCLEOTIDE SEQUENCE [GENOMIC DNA]</scope>
    <source>
        <strain>ATCC 11651 / B792 / 171D</strain>
    </source>
</reference>
<feature type="chain" id="PRO_0000173431" description="Benomyl/methotrexate resistance protein">
    <location>
        <begin position="1"/>
        <end position="564"/>
    </location>
</feature>
<feature type="transmembrane region" description="Helical" evidence="1">
    <location>
        <begin position="116"/>
        <end position="136"/>
    </location>
</feature>
<feature type="transmembrane region" description="Helical" evidence="1">
    <location>
        <begin position="153"/>
        <end position="173"/>
    </location>
</feature>
<feature type="transmembrane region" description="Helical" evidence="1">
    <location>
        <begin position="184"/>
        <end position="204"/>
    </location>
</feature>
<feature type="transmembrane region" description="Helical" evidence="1">
    <location>
        <begin position="210"/>
        <end position="229"/>
    </location>
</feature>
<feature type="transmembrane region" description="Helical" evidence="1">
    <location>
        <begin position="241"/>
        <end position="262"/>
    </location>
</feature>
<feature type="transmembrane region" description="Helical" evidence="1">
    <location>
        <begin position="274"/>
        <end position="294"/>
    </location>
</feature>
<feature type="transmembrane region" description="Helical" evidence="1">
    <location>
        <begin position="358"/>
        <end position="374"/>
    </location>
</feature>
<feature type="transmembrane region" description="Helical" evidence="1">
    <location>
        <begin position="393"/>
        <end position="411"/>
    </location>
</feature>
<feature type="transmembrane region" description="Helical" evidence="1">
    <location>
        <begin position="431"/>
        <end position="451"/>
    </location>
</feature>
<feature type="transmembrane region" description="Helical" evidence="1">
    <location>
        <begin position="457"/>
        <end position="476"/>
    </location>
</feature>
<feature type="transmembrane region" description="Helical" evidence="1">
    <location>
        <begin position="489"/>
        <end position="506"/>
    </location>
</feature>
<feature type="transmembrane region" description="Helical" evidence="1">
    <location>
        <begin position="530"/>
        <end position="551"/>
    </location>
</feature>
<feature type="region of interest" description="Disordered" evidence="2">
    <location>
        <begin position="60"/>
        <end position="101"/>
    </location>
</feature>
<feature type="compositionally biased region" description="Low complexity" evidence="2">
    <location>
        <begin position="67"/>
        <end position="88"/>
    </location>
</feature>
<comment type="function">
    <text>Probable transporter. Confers resistance to benomyl and methotrexate.</text>
</comment>
<comment type="subcellular location">
    <subcellularLocation>
        <location>Membrane</location>
        <topology>Multi-pass membrane protein</topology>
    </subcellularLocation>
</comment>
<comment type="similarity">
    <text evidence="3">Belongs to the major facilitator superfamily. CAR1 family.</text>
</comment>
<keyword id="KW-0046">Antibiotic resistance</keyword>
<keyword id="KW-0472">Membrane</keyword>
<keyword id="KW-0812">Transmembrane</keyword>
<keyword id="KW-1133">Transmembrane helix</keyword>
<keyword id="KW-0813">Transport</keyword>
<name>BMRP_CANAX</name>
<gene>
    <name type="primary">MDR1</name>
    <name type="synonym">BMR</name>
</gene>
<organism>
    <name type="scientific">Candida albicans</name>
    <name type="common">Yeast</name>
    <dbReference type="NCBI Taxonomy" id="5476"/>
    <lineage>
        <taxon>Eukaryota</taxon>
        <taxon>Fungi</taxon>
        <taxon>Dikarya</taxon>
        <taxon>Ascomycota</taxon>
        <taxon>Saccharomycotina</taxon>
        <taxon>Pichiomycetes</taxon>
        <taxon>Debaryomycetaceae</taxon>
        <taxon>Candida/Lodderomyces clade</taxon>
        <taxon>Candida</taxon>
    </lineage>
</organism>
<evidence type="ECO:0000255" key="1"/>
<evidence type="ECO:0000256" key="2">
    <source>
        <dbReference type="SAM" id="MobiDB-lite"/>
    </source>
</evidence>
<evidence type="ECO:0000305" key="3"/>
<protein>
    <recommendedName>
        <fullName>Benomyl/methotrexate resistance protein</fullName>
    </recommendedName>
</protein>
<proteinExistence type="inferred from homology"/>